<feature type="chain" id="PRO_0000383028" description="2-aminomuconate deaminase">
    <location>
        <begin position="1"/>
        <end position="142"/>
    </location>
</feature>
<feature type="strand" evidence="4">
    <location>
        <begin position="19"/>
        <end position="21"/>
    </location>
</feature>
<feature type="strand" evidence="4">
    <location>
        <begin position="24"/>
        <end position="28"/>
    </location>
</feature>
<feature type="strand" evidence="4">
    <location>
        <begin position="31"/>
        <end position="37"/>
    </location>
</feature>
<feature type="helix" evidence="4">
    <location>
        <begin position="61"/>
        <end position="78"/>
    </location>
</feature>
<feature type="helix" evidence="4">
    <location>
        <begin position="83"/>
        <end position="85"/>
    </location>
</feature>
<feature type="strand" evidence="4">
    <location>
        <begin position="86"/>
        <end position="94"/>
    </location>
</feature>
<feature type="helix" evidence="4">
    <location>
        <begin position="96"/>
        <end position="98"/>
    </location>
</feature>
<feature type="helix" evidence="4">
    <location>
        <begin position="99"/>
        <end position="106"/>
    </location>
</feature>
<feature type="turn" evidence="4">
    <location>
        <begin position="107"/>
        <end position="109"/>
    </location>
</feature>
<feature type="strand" evidence="4">
    <location>
        <begin position="116"/>
        <end position="121"/>
    </location>
</feature>
<feature type="strand" evidence="4">
    <location>
        <begin position="131"/>
        <end position="139"/>
    </location>
</feature>
<gene>
    <name type="primary">amnD</name>
</gene>
<comment type="function">
    <text evidence="2">Involved in the modified meta-cleavage pathway for the 2-aminophenol catabolism. Only active toward 2-aminomuconic acid.</text>
</comment>
<comment type="catalytic activity">
    <reaction evidence="1">
        <text>(2Z,4E)-2-aminomuconate + H2O = (3E)-2-oxohex-3-enedioate + NH4(+)</text>
        <dbReference type="Rhea" id="RHEA:20996"/>
        <dbReference type="ChEBI" id="CHEBI:15377"/>
        <dbReference type="ChEBI" id="CHEBI:28938"/>
        <dbReference type="ChEBI" id="CHEBI:64908"/>
        <dbReference type="ChEBI" id="CHEBI:77859"/>
        <dbReference type="EC" id="3.5.99.5"/>
    </reaction>
</comment>
<comment type="activity regulation">
    <text evidence="1">Slightly inhibited by Pb(2+), Hg(+) and Cu(2+).</text>
</comment>
<comment type="biophysicochemical properties">
    <phDependence>
        <text evidence="1">Optimum pH is 7.0. Stable in the range of pH 5.5-8.0.</text>
    </phDependence>
    <temperatureDependence>
        <text evidence="1">Stable up to 55 degrees Celsius.</text>
    </temperatureDependence>
</comment>
<comment type="subunit">
    <text evidence="1">Homotetramer.</text>
</comment>
<comment type="similarity">
    <text evidence="3">Belongs to the 2-aminomuconate deaminase family.</text>
</comment>
<protein>
    <recommendedName>
        <fullName>2-aminomuconate deaminase</fullName>
        <ecNumber>3.5.99.5</ecNumber>
    </recommendedName>
</protein>
<organism>
    <name type="scientific">Pseudomonas sp</name>
    <dbReference type="NCBI Taxonomy" id="306"/>
    <lineage>
        <taxon>Bacteria</taxon>
        <taxon>Pseudomonadati</taxon>
        <taxon>Pseudomonadota</taxon>
        <taxon>Gammaproteobacteria</taxon>
        <taxon>Pseudomonadales</taxon>
        <taxon>Pseudomonadaceae</taxon>
        <taxon>Pseudomonas</taxon>
    </lineage>
</organism>
<name>AMND_PSESP</name>
<sequence>MVSKADNSAKLVEGKAKPMGSFPHVKRAGDFLFVSGTSSRRPDNTFVGAEPDDTGRPRPNIELQTREVISNIRDILQSVGADLGDVVEVCSYLVNMNDFAAYNKVYAEFFDATGPARTTVAVHQLPHPQLVIEIKVVAYKPL</sequence>
<evidence type="ECO:0000269" key="1">
    <source>
    </source>
</evidence>
<evidence type="ECO:0000269" key="2">
    <source>
    </source>
</evidence>
<evidence type="ECO:0000305" key="3"/>
<evidence type="ECO:0007829" key="4">
    <source>
        <dbReference type="PDB" id="6IZH"/>
    </source>
</evidence>
<proteinExistence type="evidence at protein level"/>
<dbReference type="EC" id="3.5.99.5"/>
<dbReference type="EMBL" id="AB020521">
    <property type="protein sequence ID" value="BAB03536.1"/>
    <property type="molecule type" value="Genomic_DNA"/>
</dbReference>
<dbReference type="PDB" id="6IZH">
    <property type="method" value="X-ray"/>
    <property type="resolution" value="1.75 A"/>
    <property type="chains" value="A/B/C/D/E/F/G/H/I=1-142"/>
</dbReference>
<dbReference type="PDBsum" id="6IZH"/>
<dbReference type="SMR" id="Q9KWS2"/>
<dbReference type="KEGG" id="ag:BAB03536"/>
<dbReference type="BioCyc" id="MetaCyc:MONOMER-14742"/>
<dbReference type="GO" id="GO:0005829">
    <property type="term" value="C:cytosol"/>
    <property type="evidence" value="ECO:0007669"/>
    <property type="project" value="TreeGrafter"/>
</dbReference>
<dbReference type="GO" id="GO:0050540">
    <property type="term" value="F:2-aminomuconate deaminase activity"/>
    <property type="evidence" value="ECO:0007669"/>
    <property type="project" value="UniProtKB-EC"/>
</dbReference>
<dbReference type="GO" id="GO:0009056">
    <property type="term" value="P:catabolic process"/>
    <property type="evidence" value="ECO:0007669"/>
    <property type="project" value="UniProtKB-KW"/>
</dbReference>
<dbReference type="CDD" id="cd00448">
    <property type="entry name" value="YjgF_YER057c_UK114_family"/>
    <property type="match status" value="1"/>
</dbReference>
<dbReference type="Gene3D" id="3.30.1330.40">
    <property type="entry name" value="RutC-like"/>
    <property type="match status" value="1"/>
</dbReference>
<dbReference type="InterPro" id="IPR035959">
    <property type="entry name" value="RutC-like_sf"/>
</dbReference>
<dbReference type="InterPro" id="IPR006175">
    <property type="entry name" value="YjgF/YER057c/UK114"/>
</dbReference>
<dbReference type="PANTHER" id="PTHR11803:SF48">
    <property type="entry name" value="2-AMINOMUCONATE DEAMINASE"/>
    <property type="match status" value="1"/>
</dbReference>
<dbReference type="PANTHER" id="PTHR11803">
    <property type="entry name" value="2-IMINOBUTANOATE/2-IMINOPROPANOATE DEAMINASE RIDA"/>
    <property type="match status" value="1"/>
</dbReference>
<dbReference type="Pfam" id="PF01042">
    <property type="entry name" value="Ribonuc_L-PSP"/>
    <property type="match status" value="1"/>
</dbReference>
<dbReference type="SUPFAM" id="SSF55298">
    <property type="entry name" value="YjgF-like"/>
    <property type="match status" value="1"/>
</dbReference>
<keyword id="KW-0002">3D-structure</keyword>
<keyword id="KW-0058">Aromatic hydrocarbons catabolism</keyword>
<keyword id="KW-0903">Direct protein sequencing</keyword>
<keyword id="KW-0378">Hydrolase</keyword>
<accession>Q9KWS2</accession>
<reference key="1">
    <citation type="journal article" date="1997" name="J. Biol. Chem.">
        <title>Novel genes encoding 2-aminophenol 1,6-dioxygenase from Pseudomonas species AP-3 growing on 2-aminophenol and catalytic properties of the purified enzyme.</title>
        <authorList>
            <person name="Takenaka S."/>
            <person name="Murakami S."/>
            <person name="Shinke R."/>
            <person name="Hatakeyama K."/>
            <person name="Yukawa H."/>
            <person name="Aoki K."/>
        </authorList>
    </citation>
    <scope>NUCLEOTIDE SEQUENCE [GENOMIC DNA]</scope>
    <scope>FUNCTION</scope>
    <source>
        <strain>AP-3</strain>
    </source>
</reference>
<reference key="2">
    <citation type="journal article" date="2000" name="Arch. Microbiol.">
        <title>Complete nucleotide sequence and functional analysis of the genes for 2-aminophenol metabolism from Pseudomonas sp. AP-3.</title>
        <authorList>
            <person name="Takenaka S."/>
            <person name="Murakami S."/>
            <person name="Kim Y.J."/>
            <person name="Aoki K."/>
        </authorList>
    </citation>
    <scope>NUCLEOTIDE SEQUENCE [GENOMIC DNA]</scope>
    <scope>PROTEIN SEQUENCE OF 1-10</scope>
    <scope>CATALYTIC ACTIVITY</scope>
    <scope>BIOPHYSICOCHEMICAL PROPERTIES</scope>
    <scope>SUBSTRATE SPECIFICITY</scope>
    <scope>SUBUNIT</scope>
    <scope>ACTIVITY REGULATION</scope>
    <source>
        <strain>AP-3</strain>
    </source>
</reference>